<comment type="function">
    <text evidence="1">Poor inhibitor of platelet aggregation. The disintegrin inhibits the adhesion of cells expressing the RGD-dependent integrin alpha-5/beta-1 (ITGA5/ITGB1) to immobilized fibronectin. Inhibition on alpha-IIb/beta-3 (ITGA2B/ITGB3) is low (By similarity).</text>
</comment>
<comment type="subunit">
    <text evidence="1">Heterodimer; disulfide-linked.</text>
</comment>
<comment type="subcellular location">
    <subcellularLocation>
        <location evidence="1">Secreted</location>
    </subcellularLocation>
</comment>
<comment type="tissue specificity">
    <text>Expressed by the venom gland.</text>
</comment>
<comment type="similarity">
    <text evidence="4">Belongs to the disintegrin family. Dimeric disintegrin subfamily.</text>
</comment>
<comment type="caution">
    <text evidence="4">This protein has not been reported as being secreted in the venom.</text>
</comment>
<proteinExistence type="evidence at transcript level"/>
<accession>Q3BER2</accession>
<dbReference type="EMBL" id="AM117391">
    <property type="protein sequence ID" value="CAJ40968.1"/>
    <property type="molecule type" value="mRNA"/>
</dbReference>
<dbReference type="SMR" id="Q3BER2"/>
<dbReference type="GO" id="GO:0005576">
    <property type="term" value="C:extracellular region"/>
    <property type="evidence" value="ECO:0007669"/>
    <property type="project" value="UniProtKB-SubCell"/>
</dbReference>
<dbReference type="GO" id="GO:0090729">
    <property type="term" value="F:toxin activity"/>
    <property type="evidence" value="ECO:0007669"/>
    <property type="project" value="UniProtKB-KW"/>
</dbReference>
<dbReference type="Gene3D" id="4.10.70.10">
    <property type="entry name" value="Disintegrin domain"/>
    <property type="match status" value="1"/>
</dbReference>
<dbReference type="InterPro" id="IPR018358">
    <property type="entry name" value="Disintegrin_CS"/>
</dbReference>
<dbReference type="InterPro" id="IPR001762">
    <property type="entry name" value="Disintegrin_dom"/>
</dbReference>
<dbReference type="InterPro" id="IPR036436">
    <property type="entry name" value="Disintegrin_dom_sf"/>
</dbReference>
<dbReference type="PANTHER" id="PTHR11905">
    <property type="entry name" value="ADAM A DISINTEGRIN AND METALLOPROTEASE DOMAIN"/>
    <property type="match status" value="1"/>
</dbReference>
<dbReference type="PANTHER" id="PTHR11905:SF159">
    <property type="entry name" value="ADAM METALLOPROTEASE"/>
    <property type="match status" value="1"/>
</dbReference>
<dbReference type="Pfam" id="PF00200">
    <property type="entry name" value="Disintegrin"/>
    <property type="match status" value="1"/>
</dbReference>
<dbReference type="PRINTS" id="PR00289">
    <property type="entry name" value="DISINTEGRIN"/>
</dbReference>
<dbReference type="SMART" id="SM00050">
    <property type="entry name" value="DISIN"/>
    <property type="match status" value="1"/>
</dbReference>
<dbReference type="SUPFAM" id="SSF57552">
    <property type="entry name" value="Blood coagulation inhibitor (disintegrin)"/>
    <property type="match status" value="1"/>
</dbReference>
<dbReference type="PROSITE" id="PS00427">
    <property type="entry name" value="DISINTEGRIN_1"/>
    <property type="match status" value="1"/>
</dbReference>
<dbReference type="PROSITE" id="PS50214">
    <property type="entry name" value="DISINTEGRIN_2"/>
    <property type="match status" value="1"/>
</dbReference>
<reference key="1">
    <citation type="journal article" date="2006" name="J. Mol. Evol.">
        <title>Molecular cloning of Echis ocellatus disintegrins reveals non-venom-secreted proteins and a pathway for the evolution of ocellatusin.</title>
        <authorList>
            <person name="Juarez P."/>
            <person name="Wagstaff S.C."/>
            <person name="Sanz L."/>
            <person name="Harrison R.A."/>
            <person name="Calvete J.J."/>
        </authorList>
    </citation>
    <scope>NUCLEOTIDE SEQUENCE [MRNA]</scope>
    <source>
        <tissue>Venom gland</tissue>
    </source>
</reference>
<sequence>MIQVLLVIICLAVFPYQGSSIILESGNVNDFELVYPKKVTVLPTGAMNSAHPCCDPVMCKPKRGEHCISGPCCRNCKFLSPGTICKKAWGDDMNDYCTGISSDCPRNPWKD</sequence>
<evidence type="ECO:0000250" key="1"/>
<evidence type="ECO:0000255" key="2"/>
<evidence type="ECO:0000255" key="3">
    <source>
        <dbReference type="PROSITE-ProRule" id="PRU00068"/>
    </source>
</evidence>
<evidence type="ECO:0000305" key="4"/>
<name>DID1_ECHOC</name>
<feature type="signal peptide" evidence="2">
    <location>
        <begin position="1"/>
        <end position="20"/>
    </location>
</feature>
<feature type="propeptide" id="PRO_0000319014" evidence="1">
    <location>
        <begin position="21"/>
        <end position="46"/>
    </location>
</feature>
<feature type="chain" id="PRO_5000076911" description="Disintegrin Eo1 subunit 1">
    <location>
        <begin position="47"/>
        <end position="109"/>
    </location>
</feature>
<feature type="propeptide" id="PRO_0000319015" evidence="1">
    <location>
        <begin position="110"/>
        <end position="111"/>
    </location>
</feature>
<feature type="domain" description="Disintegrin" evidence="3">
    <location>
        <begin position="26"/>
        <end position="111"/>
    </location>
</feature>
<feature type="short sequence motif" description="Cell attachment site; atypical (WGD)">
    <location>
        <begin position="89"/>
        <end position="91"/>
    </location>
</feature>
<feature type="disulfide bond" evidence="3">
    <location>
        <begin position="53"/>
        <end position="76"/>
    </location>
</feature>
<feature type="disulfide bond" description="Interchain" evidence="3">
    <location>
        <position position="54"/>
    </location>
</feature>
<feature type="disulfide bond" description="Interchain" evidence="3">
    <location>
        <position position="59"/>
    </location>
</feature>
<feature type="disulfide bond" evidence="3">
    <location>
        <begin position="67"/>
        <end position="73"/>
    </location>
</feature>
<feature type="disulfide bond" evidence="3">
    <location>
        <begin position="72"/>
        <end position="97"/>
    </location>
</feature>
<feature type="disulfide bond" evidence="3">
    <location>
        <begin position="85"/>
        <end position="104"/>
    </location>
</feature>
<keyword id="KW-1217">Cell adhesion impairing toxin</keyword>
<keyword id="KW-1015">Disulfide bond</keyword>
<keyword id="KW-1199">Hemostasis impairing toxin</keyword>
<keyword id="KW-1201">Platelet aggregation inhibiting toxin</keyword>
<keyword id="KW-0964">Secreted</keyword>
<keyword id="KW-0732">Signal</keyword>
<keyword id="KW-0800">Toxin</keyword>
<organism>
    <name type="scientific">Echis ocellatus</name>
    <name type="common">Ocellated saw-scaled viper</name>
    <dbReference type="NCBI Taxonomy" id="99586"/>
    <lineage>
        <taxon>Eukaryota</taxon>
        <taxon>Metazoa</taxon>
        <taxon>Chordata</taxon>
        <taxon>Craniata</taxon>
        <taxon>Vertebrata</taxon>
        <taxon>Euteleostomi</taxon>
        <taxon>Lepidosauria</taxon>
        <taxon>Squamata</taxon>
        <taxon>Bifurcata</taxon>
        <taxon>Unidentata</taxon>
        <taxon>Episquamata</taxon>
        <taxon>Toxicofera</taxon>
        <taxon>Serpentes</taxon>
        <taxon>Colubroidea</taxon>
        <taxon>Viperidae</taxon>
        <taxon>Viperinae</taxon>
        <taxon>Echis</taxon>
    </lineage>
</organism>
<protein>
    <recommendedName>
        <fullName>Disintegrin Eo1 subunit 1</fullName>
        <shortName>Eo1-1</shortName>
    </recommendedName>
</protein>